<reference key="1">
    <citation type="journal article" date="2009" name="BMC Genomics">
        <title>Conservation in the face of diversity: multistrain analysis of an intracellular bacterium.</title>
        <authorList>
            <person name="Dark M.J."/>
            <person name="Herndon D.R."/>
            <person name="Kappmeyer L.S."/>
            <person name="Gonzales M.P."/>
            <person name="Nordeen E."/>
            <person name="Palmer G.H."/>
            <person name="Knowles D.P. Jr."/>
            <person name="Brayton K.A."/>
        </authorList>
    </citation>
    <scope>NUCLEOTIDE SEQUENCE [LARGE SCALE GENOMIC DNA]</scope>
    <source>
        <strain>Florida</strain>
    </source>
</reference>
<comment type="function">
    <text evidence="1">Catalyzes the reversible interconversion of serine and glycine with tetrahydrofolate (THF) serving as the one-carbon carrier. This reaction serves as the major source of one-carbon groups required for the biosynthesis of purines, thymidylate, methionine, and other important biomolecules. Also exhibits THF-independent aldolase activity toward beta-hydroxyamino acids, producing glycine and aldehydes, via a retro-aldol mechanism.</text>
</comment>
<comment type="catalytic activity">
    <reaction evidence="1">
        <text>(6R)-5,10-methylene-5,6,7,8-tetrahydrofolate + glycine + H2O = (6S)-5,6,7,8-tetrahydrofolate + L-serine</text>
        <dbReference type="Rhea" id="RHEA:15481"/>
        <dbReference type="ChEBI" id="CHEBI:15377"/>
        <dbReference type="ChEBI" id="CHEBI:15636"/>
        <dbReference type="ChEBI" id="CHEBI:33384"/>
        <dbReference type="ChEBI" id="CHEBI:57305"/>
        <dbReference type="ChEBI" id="CHEBI:57453"/>
        <dbReference type="EC" id="2.1.2.1"/>
    </reaction>
</comment>
<comment type="cofactor">
    <cofactor evidence="1">
        <name>pyridoxal 5'-phosphate</name>
        <dbReference type="ChEBI" id="CHEBI:597326"/>
    </cofactor>
</comment>
<comment type="pathway">
    <text evidence="1">One-carbon metabolism; tetrahydrofolate interconversion.</text>
</comment>
<comment type="pathway">
    <text evidence="1">Amino-acid biosynthesis; glycine biosynthesis; glycine from L-serine: step 1/1.</text>
</comment>
<comment type="subunit">
    <text evidence="1">Homodimer.</text>
</comment>
<comment type="subcellular location">
    <subcellularLocation>
        <location evidence="1">Cytoplasm</location>
    </subcellularLocation>
</comment>
<comment type="similarity">
    <text evidence="1">Belongs to the SHMT family.</text>
</comment>
<accession>B9KHP8</accession>
<gene>
    <name evidence="1" type="primary">glyA</name>
    <name type="ordered locus">AMF_122</name>
</gene>
<evidence type="ECO:0000255" key="1">
    <source>
        <dbReference type="HAMAP-Rule" id="MF_00051"/>
    </source>
</evidence>
<organism>
    <name type="scientific">Anaplasma marginale (strain Florida)</name>
    <dbReference type="NCBI Taxonomy" id="320483"/>
    <lineage>
        <taxon>Bacteria</taxon>
        <taxon>Pseudomonadati</taxon>
        <taxon>Pseudomonadota</taxon>
        <taxon>Alphaproteobacteria</taxon>
        <taxon>Rickettsiales</taxon>
        <taxon>Anaplasmataceae</taxon>
        <taxon>Anaplasma</taxon>
    </lineage>
</organism>
<protein>
    <recommendedName>
        <fullName evidence="1">Serine hydroxymethyltransferase</fullName>
        <shortName evidence="1">SHMT</shortName>
        <shortName evidence="1">Serine methylase</shortName>
        <ecNumber evidence="1">2.1.2.1</ecNumber>
    </recommendedName>
</protein>
<keyword id="KW-0028">Amino-acid biosynthesis</keyword>
<keyword id="KW-0963">Cytoplasm</keyword>
<keyword id="KW-0554">One-carbon metabolism</keyword>
<keyword id="KW-0663">Pyridoxal phosphate</keyword>
<keyword id="KW-1185">Reference proteome</keyword>
<keyword id="KW-0808">Transferase</keyword>
<sequence>MVGYIGNVDIGVFDAEVANSISAELERQNTLLQMIASENFVSRAVLQAQGSVLTNKYAEGYAGSRYYCGCALVDVVENLAVERLCRLFGCKFANVQPHSGSQANQQVFMALLKPGDTILGMSLDCGGHLTHGAAPNVSGRWFNAVSYGVNRDTGLIDMDEVEALALSAKPSLIIAGASSYPRRIDFAAFRAIADKVGAYLLADIAHYSGLIAGGCYPSPFGHAHVVTSTTHKTLRGPRGAVIMTDDEEIHKKIRLSVFPGMQGGPLMHVIAAKAVAFKEALHPDFKLYAQQVLENSRVLAGVLSSEGLDVVTGGTDSHIVLLDLRSKGVTGREVSSSLERAGIVCNKNAVPFDTEKPWVTSGIRLGSAAETSRGLGVPEFESIGRLVAKVVNACSLGQEKMSAAEAEVRREVNGLVRSLPMSAFPVCEVC</sequence>
<proteinExistence type="inferred from homology"/>
<feature type="chain" id="PRO_1000195428" description="Serine hydroxymethyltransferase">
    <location>
        <begin position="1"/>
        <end position="430"/>
    </location>
</feature>
<feature type="binding site" evidence="1">
    <location>
        <position position="123"/>
    </location>
    <ligand>
        <name>(6S)-5,6,7,8-tetrahydrofolate</name>
        <dbReference type="ChEBI" id="CHEBI:57453"/>
    </ligand>
</feature>
<feature type="binding site" evidence="1">
    <location>
        <begin position="127"/>
        <end position="129"/>
    </location>
    <ligand>
        <name>(6S)-5,6,7,8-tetrahydrofolate</name>
        <dbReference type="ChEBI" id="CHEBI:57453"/>
    </ligand>
</feature>
<feature type="binding site" evidence="1">
    <location>
        <position position="248"/>
    </location>
    <ligand>
        <name>(6S)-5,6,7,8-tetrahydrofolate</name>
        <dbReference type="ChEBI" id="CHEBI:57453"/>
    </ligand>
</feature>
<feature type="site" description="Plays an important role in substrate specificity" evidence="1">
    <location>
        <position position="231"/>
    </location>
</feature>
<feature type="modified residue" description="N6-(pyridoxal phosphate)lysine" evidence="1">
    <location>
        <position position="232"/>
    </location>
</feature>
<name>GLYA_ANAMF</name>
<dbReference type="EC" id="2.1.2.1" evidence="1"/>
<dbReference type="EMBL" id="CP001079">
    <property type="protein sequence ID" value="ACM49010.1"/>
    <property type="molecule type" value="Genomic_DNA"/>
</dbReference>
<dbReference type="RefSeq" id="WP_010267094.1">
    <property type="nucleotide sequence ID" value="NC_012026.1"/>
</dbReference>
<dbReference type="SMR" id="B9KHP8"/>
<dbReference type="STRING" id="320483.AMF_122"/>
<dbReference type="GeneID" id="7398584"/>
<dbReference type="KEGG" id="amf:AMF_122"/>
<dbReference type="PATRIC" id="fig|320483.3.peg.141"/>
<dbReference type="eggNOG" id="COG0112">
    <property type="taxonomic scope" value="Bacteria"/>
</dbReference>
<dbReference type="HOGENOM" id="CLU_022477_2_1_5"/>
<dbReference type="UniPathway" id="UPA00193"/>
<dbReference type="UniPathway" id="UPA00288">
    <property type="reaction ID" value="UER01023"/>
</dbReference>
<dbReference type="Proteomes" id="UP000007307">
    <property type="component" value="Chromosome"/>
</dbReference>
<dbReference type="GO" id="GO:0005829">
    <property type="term" value="C:cytosol"/>
    <property type="evidence" value="ECO:0007669"/>
    <property type="project" value="TreeGrafter"/>
</dbReference>
<dbReference type="GO" id="GO:0004372">
    <property type="term" value="F:glycine hydroxymethyltransferase activity"/>
    <property type="evidence" value="ECO:0007669"/>
    <property type="project" value="UniProtKB-UniRule"/>
</dbReference>
<dbReference type="GO" id="GO:0030170">
    <property type="term" value="F:pyridoxal phosphate binding"/>
    <property type="evidence" value="ECO:0007669"/>
    <property type="project" value="UniProtKB-UniRule"/>
</dbReference>
<dbReference type="GO" id="GO:0019264">
    <property type="term" value="P:glycine biosynthetic process from serine"/>
    <property type="evidence" value="ECO:0007669"/>
    <property type="project" value="UniProtKB-UniRule"/>
</dbReference>
<dbReference type="GO" id="GO:0035999">
    <property type="term" value="P:tetrahydrofolate interconversion"/>
    <property type="evidence" value="ECO:0007669"/>
    <property type="project" value="UniProtKB-UniRule"/>
</dbReference>
<dbReference type="CDD" id="cd00378">
    <property type="entry name" value="SHMT"/>
    <property type="match status" value="1"/>
</dbReference>
<dbReference type="FunFam" id="3.40.640.10:FF:000001">
    <property type="entry name" value="Serine hydroxymethyltransferase"/>
    <property type="match status" value="1"/>
</dbReference>
<dbReference type="Gene3D" id="3.90.1150.10">
    <property type="entry name" value="Aspartate Aminotransferase, domain 1"/>
    <property type="match status" value="1"/>
</dbReference>
<dbReference type="Gene3D" id="3.40.640.10">
    <property type="entry name" value="Type I PLP-dependent aspartate aminotransferase-like (Major domain)"/>
    <property type="match status" value="1"/>
</dbReference>
<dbReference type="HAMAP" id="MF_00051">
    <property type="entry name" value="SHMT"/>
    <property type="match status" value="1"/>
</dbReference>
<dbReference type="InterPro" id="IPR015424">
    <property type="entry name" value="PyrdxlP-dep_Trfase"/>
</dbReference>
<dbReference type="InterPro" id="IPR015421">
    <property type="entry name" value="PyrdxlP-dep_Trfase_major"/>
</dbReference>
<dbReference type="InterPro" id="IPR015422">
    <property type="entry name" value="PyrdxlP-dep_Trfase_small"/>
</dbReference>
<dbReference type="InterPro" id="IPR001085">
    <property type="entry name" value="Ser_HO-MeTrfase"/>
</dbReference>
<dbReference type="InterPro" id="IPR049943">
    <property type="entry name" value="Ser_HO-MeTrfase-like"/>
</dbReference>
<dbReference type="InterPro" id="IPR019798">
    <property type="entry name" value="Ser_HO-MeTrfase_PLP_BS"/>
</dbReference>
<dbReference type="InterPro" id="IPR039429">
    <property type="entry name" value="SHMT-like_dom"/>
</dbReference>
<dbReference type="NCBIfam" id="NF000586">
    <property type="entry name" value="PRK00011.1"/>
    <property type="match status" value="1"/>
</dbReference>
<dbReference type="PANTHER" id="PTHR11680">
    <property type="entry name" value="SERINE HYDROXYMETHYLTRANSFERASE"/>
    <property type="match status" value="1"/>
</dbReference>
<dbReference type="PANTHER" id="PTHR11680:SF35">
    <property type="entry name" value="SERINE HYDROXYMETHYLTRANSFERASE 1"/>
    <property type="match status" value="1"/>
</dbReference>
<dbReference type="Pfam" id="PF00464">
    <property type="entry name" value="SHMT"/>
    <property type="match status" value="1"/>
</dbReference>
<dbReference type="PIRSF" id="PIRSF000412">
    <property type="entry name" value="SHMT"/>
    <property type="match status" value="1"/>
</dbReference>
<dbReference type="SUPFAM" id="SSF53383">
    <property type="entry name" value="PLP-dependent transferases"/>
    <property type="match status" value="1"/>
</dbReference>
<dbReference type="PROSITE" id="PS00096">
    <property type="entry name" value="SHMT"/>
    <property type="match status" value="1"/>
</dbReference>